<dbReference type="EMBL" id="CR954253">
    <property type="protein sequence ID" value="CAI97234.1"/>
    <property type="molecule type" value="Genomic_DNA"/>
</dbReference>
<dbReference type="RefSeq" id="WP_011543641.1">
    <property type="nucleotide sequence ID" value="NZ_JQAV01000001.1"/>
</dbReference>
<dbReference type="SMR" id="Q1GBL5"/>
<dbReference type="STRING" id="390333.Ldb0399"/>
<dbReference type="KEGG" id="ldb:Ldb0399"/>
<dbReference type="eggNOG" id="COG0090">
    <property type="taxonomic scope" value="Bacteria"/>
</dbReference>
<dbReference type="HOGENOM" id="CLU_036235_2_1_9"/>
<dbReference type="BioCyc" id="LDEL390333:LDB_RS01690-MONOMER"/>
<dbReference type="Proteomes" id="UP000001259">
    <property type="component" value="Chromosome"/>
</dbReference>
<dbReference type="GO" id="GO:0015934">
    <property type="term" value="C:large ribosomal subunit"/>
    <property type="evidence" value="ECO:0007669"/>
    <property type="project" value="InterPro"/>
</dbReference>
<dbReference type="GO" id="GO:0019843">
    <property type="term" value="F:rRNA binding"/>
    <property type="evidence" value="ECO:0007669"/>
    <property type="project" value="UniProtKB-UniRule"/>
</dbReference>
<dbReference type="GO" id="GO:0003735">
    <property type="term" value="F:structural constituent of ribosome"/>
    <property type="evidence" value="ECO:0007669"/>
    <property type="project" value="InterPro"/>
</dbReference>
<dbReference type="GO" id="GO:0016740">
    <property type="term" value="F:transferase activity"/>
    <property type="evidence" value="ECO:0007669"/>
    <property type="project" value="InterPro"/>
</dbReference>
<dbReference type="GO" id="GO:0002181">
    <property type="term" value="P:cytoplasmic translation"/>
    <property type="evidence" value="ECO:0007669"/>
    <property type="project" value="TreeGrafter"/>
</dbReference>
<dbReference type="FunFam" id="2.30.30.30:FF:000001">
    <property type="entry name" value="50S ribosomal protein L2"/>
    <property type="match status" value="1"/>
</dbReference>
<dbReference type="FunFam" id="2.40.50.140:FF:000003">
    <property type="entry name" value="50S ribosomal protein L2"/>
    <property type="match status" value="1"/>
</dbReference>
<dbReference type="FunFam" id="4.10.950.10:FF:000001">
    <property type="entry name" value="50S ribosomal protein L2"/>
    <property type="match status" value="1"/>
</dbReference>
<dbReference type="Gene3D" id="2.30.30.30">
    <property type="match status" value="1"/>
</dbReference>
<dbReference type="Gene3D" id="2.40.50.140">
    <property type="entry name" value="Nucleic acid-binding proteins"/>
    <property type="match status" value="1"/>
</dbReference>
<dbReference type="Gene3D" id="4.10.950.10">
    <property type="entry name" value="Ribosomal protein L2, domain 3"/>
    <property type="match status" value="1"/>
</dbReference>
<dbReference type="HAMAP" id="MF_01320_B">
    <property type="entry name" value="Ribosomal_uL2_B"/>
    <property type="match status" value="1"/>
</dbReference>
<dbReference type="InterPro" id="IPR012340">
    <property type="entry name" value="NA-bd_OB-fold"/>
</dbReference>
<dbReference type="InterPro" id="IPR014722">
    <property type="entry name" value="Rib_uL2_dom2"/>
</dbReference>
<dbReference type="InterPro" id="IPR002171">
    <property type="entry name" value="Ribosomal_uL2"/>
</dbReference>
<dbReference type="InterPro" id="IPR005880">
    <property type="entry name" value="Ribosomal_uL2_bac/org-type"/>
</dbReference>
<dbReference type="InterPro" id="IPR022669">
    <property type="entry name" value="Ribosomal_uL2_C"/>
</dbReference>
<dbReference type="InterPro" id="IPR022671">
    <property type="entry name" value="Ribosomal_uL2_CS"/>
</dbReference>
<dbReference type="InterPro" id="IPR014726">
    <property type="entry name" value="Ribosomal_uL2_dom3"/>
</dbReference>
<dbReference type="InterPro" id="IPR022666">
    <property type="entry name" value="Ribosomal_uL2_RNA-bd_dom"/>
</dbReference>
<dbReference type="InterPro" id="IPR008991">
    <property type="entry name" value="Translation_prot_SH3-like_sf"/>
</dbReference>
<dbReference type="NCBIfam" id="TIGR01171">
    <property type="entry name" value="rplB_bact"/>
    <property type="match status" value="1"/>
</dbReference>
<dbReference type="PANTHER" id="PTHR13691:SF5">
    <property type="entry name" value="LARGE RIBOSOMAL SUBUNIT PROTEIN UL2M"/>
    <property type="match status" value="1"/>
</dbReference>
<dbReference type="PANTHER" id="PTHR13691">
    <property type="entry name" value="RIBOSOMAL PROTEIN L2"/>
    <property type="match status" value="1"/>
</dbReference>
<dbReference type="Pfam" id="PF00181">
    <property type="entry name" value="Ribosomal_L2"/>
    <property type="match status" value="1"/>
</dbReference>
<dbReference type="Pfam" id="PF03947">
    <property type="entry name" value="Ribosomal_L2_C"/>
    <property type="match status" value="1"/>
</dbReference>
<dbReference type="PIRSF" id="PIRSF002158">
    <property type="entry name" value="Ribosomal_L2"/>
    <property type="match status" value="1"/>
</dbReference>
<dbReference type="SMART" id="SM01383">
    <property type="entry name" value="Ribosomal_L2"/>
    <property type="match status" value="1"/>
</dbReference>
<dbReference type="SMART" id="SM01382">
    <property type="entry name" value="Ribosomal_L2_C"/>
    <property type="match status" value="1"/>
</dbReference>
<dbReference type="SUPFAM" id="SSF50249">
    <property type="entry name" value="Nucleic acid-binding proteins"/>
    <property type="match status" value="1"/>
</dbReference>
<dbReference type="SUPFAM" id="SSF50104">
    <property type="entry name" value="Translation proteins SH3-like domain"/>
    <property type="match status" value="1"/>
</dbReference>
<dbReference type="PROSITE" id="PS00467">
    <property type="entry name" value="RIBOSOMAL_L2"/>
    <property type="match status" value="1"/>
</dbReference>
<reference key="1">
    <citation type="journal article" date="2006" name="Proc. Natl. Acad. Sci. U.S.A.">
        <title>The complete genome sequence of Lactobacillus bulgaricus reveals extensive and ongoing reductive evolution.</title>
        <authorList>
            <person name="van de Guchte M."/>
            <person name="Penaud S."/>
            <person name="Grimaldi C."/>
            <person name="Barbe V."/>
            <person name="Bryson K."/>
            <person name="Nicolas P."/>
            <person name="Robert C."/>
            <person name="Oztas S."/>
            <person name="Mangenot S."/>
            <person name="Couloux A."/>
            <person name="Loux V."/>
            <person name="Dervyn R."/>
            <person name="Bossy R."/>
            <person name="Bolotin A."/>
            <person name="Batto J.-M."/>
            <person name="Walunas T."/>
            <person name="Gibrat J.-F."/>
            <person name="Bessieres P."/>
            <person name="Weissenbach J."/>
            <person name="Ehrlich S.D."/>
            <person name="Maguin E."/>
        </authorList>
    </citation>
    <scope>NUCLEOTIDE SEQUENCE [LARGE SCALE GENOMIC DNA]</scope>
    <source>
        <strain>ATCC 11842 / DSM 20081 / BCRC 10696 / JCM 1002 / NBRC 13953 / NCIMB 11778 / NCTC 12712 / WDCM 00102 / Lb 14</strain>
    </source>
</reference>
<gene>
    <name evidence="1" type="primary">rplB</name>
    <name type="ordered locus">Ldb0399</name>
</gene>
<organism>
    <name type="scientific">Lactobacillus delbrueckii subsp. bulgaricus (strain ATCC 11842 / DSM 20081 / BCRC 10696 / JCM 1002 / NBRC 13953 / NCIMB 11778 / NCTC 12712 / WDCM 00102 / Lb 14)</name>
    <dbReference type="NCBI Taxonomy" id="390333"/>
    <lineage>
        <taxon>Bacteria</taxon>
        <taxon>Bacillati</taxon>
        <taxon>Bacillota</taxon>
        <taxon>Bacilli</taxon>
        <taxon>Lactobacillales</taxon>
        <taxon>Lactobacillaceae</taxon>
        <taxon>Lactobacillus</taxon>
    </lineage>
</organism>
<evidence type="ECO:0000255" key="1">
    <source>
        <dbReference type="HAMAP-Rule" id="MF_01320"/>
    </source>
</evidence>
<evidence type="ECO:0000256" key="2">
    <source>
        <dbReference type="SAM" id="MobiDB-lite"/>
    </source>
</evidence>
<evidence type="ECO:0000305" key="3"/>
<keyword id="KW-1185">Reference proteome</keyword>
<keyword id="KW-0687">Ribonucleoprotein</keyword>
<keyword id="KW-0689">Ribosomal protein</keyword>
<keyword id="KW-0694">RNA-binding</keyword>
<keyword id="KW-0699">rRNA-binding</keyword>
<proteinExistence type="inferred from homology"/>
<name>RL2_LACDA</name>
<feature type="chain" id="PRO_0000309938" description="Large ribosomal subunit protein uL2">
    <location>
        <begin position="1"/>
        <end position="278"/>
    </location>
</feature>
<feature type="region of interest" description="Disordered" evidence="2">
    <location>
        <begin position="208"/>
        <end position="278"/>
    </location>
</feature>
<feature type="compositionally biased region" description="Basic residues" evidence="2">
    <location>
        <begin position="209"/>
        <end position="219"/>
    </location>
</feature>
<feature type="compositionally biased region" description="Basic and acidic residues" evidence="2">
    <location>
        <begin position="258"/>
        <end position="270"/>
    </location>
</feature>
<accession>Q1GBL5</accession>
<protein>
    <recommendedName>
        <fullName evidence="1">Large ribosomal subunit protein uL2</fullName>
    </recommendedName>
    <alternativeName>
        <fullName evidence="3">50S ribosomal protein L2</fullName>
    </alternativeName>
</protein>
<comment type="function">
    <text evidence="1">One of the primary rRNA binding proteins. Required for association of the 30S and 50S subunits to form the 70S ribosome, for tRNA binding and peptide bond formation. It has been suggested to have peptidyltransferase activity; this is somewhat controversial. Makes several contacts with the 16S rRNA in the 70S ribosome.</text>
</comment>
<comment type="subunit">
    <text evidence="1">Part of the 50S ribosomal subunit. Forms a bridge to the 30S subunit in the 70S ribosome.</text>
</comment>
<comment type="similarity">
    <text evidence="1">Belongs to the universal ribosomal protein uL2 family.</text>
</comment>
<sequence length="278" mass="30270">MAIKVYKPTSNGRRNMTSSDFAEITKSKPEKTLLASKSKTAGRNSYGHITVRHRGGGHKQQYRIIDFKRTKDNVKAKIVAIEYDPNRSANIALLHYTDGTKAYILAPKGLTVGSWVESGVDADIKVGNALPLKNIPTGTEVHNIELKPGKGGQIARSAGTSAQVLGVDGKYTQVRLQSGEVREILSECRATIGAVGNEQHSLINIGKAGRSRWMGKRPQSRGSVMNPNDHPHGGGEGKAPVGRPQPMTPWGKKSRGIKTRDSKKASEKLIIRHRKGRK</sequence>